<organism>
    <name type="scientific">Streptococcus pneumoniae serotype 4 (strain ATCC BAA-334 / TIGR4)</name>
    <dbReference type="NCBI Taxonomy" id="170187"/>
    <lineage>
        <taxon>Bacteria</taxon>
        <taxon>Bacillati</taxon>
        <taxon>Bacillota</taxon>
        <taxon>Bacilli</taxon>
        <taxon>Lactobacillales</taxon>
        <taxon>Streptococcaceae</taxon>
        <taxon>Streptococcus</taxon>
    </lineage>
</organism>
<protein>
    <recommendedName>
        <fullName>Probable transketolase</fullName>
        <shortName>TK</shortName>
        <ecNumber>2.2.1.1</ecNumber>
    </recommendedName>
</protein>
<proteinExistence type="evidence at protein level"/>
<name>TKT_STRPN</name>
<reference key="1">
    <citation type="journal article" date="1990" name="J. Bacteriol.">
        <title>Genetic transformation in Streptococcus pneumoniae: nucleotide sequence and predicted amino acid sequence of recP.</title>
        <authorList>
            <person name="Radnis B.A."/>
            <person name="Rhee D.-K."/>
            <person name="Morrison D.A."/>
        </authorList>
    </citation>
    <scope>NUCLEOTIDE SEQUENCE [GENOMIC DNA]</scope>
    <source>
        <strain>Rx / CP1200</strain>
    </source>
</reference>
<reference key="2">
    <citation type="journal article" date="2001" name="Science">
        <title>Complete genome sequence of a virulent isolate of Streptococcus pneumoniae.</title>
        <authorList>
            <person name="Tettelin H."/>
            <person name="Nelson K.E."/>
            <person name="Paulsen I.T."/>
            <person name="Eisen J.A."/>
            <person name="Read T.D."/>
            <person name="Peterson S.N."/>
            <person name="Heidelberg J.F."/>
            <person name="DeBoy R.T."/>
            <person name="Haft D.H."/>
            <person name="Dodson R.J."/>
            <person name="Durkin A.S."/>
            <person name="Gwinn M.L."/>
            <person name="Kolonay J.F."/>
            <person name="Nelson W.C."/>
            <person name="Peterson J.D."/>
            <person name="Umayam L.A."/>
            <person name="White O."/>
            <person name="Salzberg S.L."/>
            <person name="Lewis M.R."/>
            <person name="Radune D."/>
            <person name="Holtzapple E.K."/>
            <person name="Khouri H.M."/>
            <person name="Wolf A.M."/>
            <person name="Utterback T.R."/>
            <person name="Hansen C.L."/>
            <person name="McDonald L.A."/>
            <person name="Feldblyum T.V."/>
            <person name="Angiuoli S.V."/>
            <person name="Dickinson T."/>
            <person name="Hickey E.K."/>
            <person name="Holt I.E."/>
            <person name="Loftus B.J."/>
            <person name="Yang F."/>
            <person name="Smith H.O."/>
            <person name="Venter J.C."/>
            <person name="Dougherty B.A."/>
            <person name="Morrison D.A."/>
            <person name="Hollingshead S.K."/>
            <person name="Fraser C.M."/>
        </authorList>
    </citation>
    <scope>NUCLEOTIDE SEQUENCE [LARGE SCALE GENOMIC DNA]</scope>
    <source>
        <strain>ATCC BAA-334 / TIGR4</strain>
    </source>
</reference>
<reference key="3">
    <citation type="journal article" date="1993" name="Res. Microbiol.">
        <title>A diverse transketolase family that includes the RecP protein of Streptococcus pneumoniae, a protein implicated in genetic recombination.</title>
        <authorList>
            <person name="Reizer J."/>
            <person name="Reizer A."/>
            <person name="Bairoch A."/>
            <person name="Saier M.H. Jr."/>
        </authorList>
    </citation>
    <scope>POSSIBLE FUNCTION</scope>
</reference>
<evidence type="ECO:0000250" key="1"/>
<evidence type="ECO:0000269" key="2">
    <source>
    </source>
</evidence>
<evidence type="ECO:0000305" key="3"/>
<evidence type="ECO:0007829" key="4">
    <source>
        <dbReference type="PDB" id="8R3R"/>
    </source>
</evidence>
<accession>P22976</accession>
<keyword id="KW-0002">3D-structure</keyword>
<keyword id="KW-0106">Calcium</keyword>
<keyword id="KW-0233">DNA recombination</keyword>
<keyword id="KW-0460">Magnesium</keyword>
<keyword id="KW-0479">Metal-binding</keyword>
<keyword id="KW-1185">Reference proteome</keyword>
<keyword id="KW-0786">Thiamine pyrophosphate</keyword>
<keyword id="KW-0808">Transferase</keyword>
<dbReference type="EC" id="2.2.1.1"/>
<dbReference type="EMBL" id="M31296">
    <property type="protein sequence ID" value="AAA26967.1"/>
    <property type="status" value="ALT_FRAME"/>
    <property type="molecule type" value="Genomic_DNA"/>
</dbReference>
<dbReference type="EMBL" id="AE005672">
    <property type="protein sequence ID" value="AAK76095.1"/>
    <property type="molecule type" value="Genomic_DNA"/>
</dbReference>
<dbReference type="PIR" id="A43018">
    <property type="entry name" value="XJSOKP"/>
</dbReference>
<dbReference type="PIR" id="F95237">
    <property type="entry name" value="F95237"/>
</dbReference>
<dbReference type="RefSeq" id="WP_000067853.1">
    <property type="nucleotide sequence ID" value="NZ_CP155539.1"/>
</dbReference>
<dbReference type="PDB" id="8R3R">
    <property type="method" value="X-ray"/>
    <property type="resolution" value="2.35 A"/>
    <property type="chains" value="A/B/C/D=1-658"/>
</dbReference>
<dbReference type="PDBsum" id="8R3R"/>
<dbReference type="SMR" id="P22976"/>
<dbReference type="PaxDb" id="170187-SP_2030"/>
<dbReference type="EnsemblBacteria" id="AAK76095">
    <property type="protein sequence ID" value="AAK76095"/>
    <property type="gene ID" value="SP_2030"/>
</dbReference>
<dbReference type="KEGG" id="spn:SP_2030"/>
<dbReference type="eggNOG" id="COG0021">
    <property type="taxonomic scope" value="Bacteria"/>
</dbReference>
<dbReference type="PhylomeDB" id="P22976"/>
<dbReference type="BioCyc" id="SPNE170187:G1FZB-2100-MONOMER"/>
<dbReference type="Proteomes" id="UP000000585">
    <property type="component" value="Chromosome"/>
</dbReference>
<dbReference type="GO" id="GO:0005829">
    <property type="term" value="C:cytosol"/>
    <property type="evidence" value="ECO:0007669"/>
    <property type="project" value="TreeGrafter"/>
</dbReference>
<dbReference type="GO" id="GO:0046872">
    <property type="term" value="F:metal ion binding"/>
    <property type="evidence" value="ECO:0007669"/>
    <property type="project" value="UniProtKB-KW"/>
</dbReference>
<dbReference type="GO" id="GO:0004802">
    <property type="term" value="F:transketolase activity"/>
    <property type="evidence" value="ECO:0007669"/>
    <property type="project" value="UniProtKB-EC"/>
</dbReference>
<dbReference type="GO" id="GO:0006310">
    <property type="term" value="P:DNA recombination"/>
    <property type="evidence" value="ECO:0007669"/>
    <property type="project" value="UniProtKB-KW"/>
</dbReference>
<dbReference type="GO" id="GO:0006098">
    <property type="term" value="P:pentose-phosphate shunt"/>
    <property type="evidence" value="ECO:0007669"/>
    <property type="project" value="TreeGrafter"/>
</dbReference>
<dbReference type="CDD" id="cd07033">
    <property type="entry name" value="TPP_PYR_DXS_TK_like"/>
    <property type="match status" value="1"/>
</dbReference>
<dbReference type="CDD" id="cd02012">
    <property type="entry name" value="TPP_TK"/>
    <property type="match status" value="1"/>
</dbReference>
<dbReference type="FunFam" id="3.40.50.920:FF:000003">
    <property type="entry name" value="Transketolase"/>
    <property type="match status" value="1"/>
</dbReference>
<dbReference type="FunFam" id="3.40.50.970:FF:000004">
    <property type="entry name" value="Transketolase"/>
    <property type="match status" value="1"/>
</dbReference>
<dbReference type="FunFam" id="3.40.50.970:FF:000045">
    <property type="entry name" value="Transketolase"/>
    <property type="match status" value="1"/>
</dbReference>
<dbReference type="Gene3D" id="3.40.50.920">
    <property type="match status" value="1"/>
</dbReference>
<dbReference type="Gene3D" id="3.40.50.970">
    <property type="match status" value="2"/>
</dbReference>
<dbReference type="InterPro" id="IPR029061">
    <property type="entry name" value="THDP-binding"/>
</dbReference>
<dbReference type="InterPro" id="IPR009014">
    <property type="entry name" value="Transketo_C/PFOR_II"/>
</dbReference>
<dbReference type="InterPro" id="IPR055152">
    <property type="entry name" value="Transketolase-like_C_2"/>
</dbReference>
<dbReference type="InterPro" id="IPR005475">
    <property type="entry name" value="Transketolase-like_Pyr-bd"/>
</dbReference>
<dbReference type="InterPro" id="IPR005478">
    <property type="entry name" value="Transketolase_bac-like"/>
</dbReference>
<dbReference type="InterPro" id="IPR020826">
    <property type="entry name" value="Transketolase_BS"/>
</dbReference>
<dbReference type="InterPro" id="IPR049557">
    <property type="entry name" value="Transketolase_CS"/>
</dbReference>
<dbReference type="InterPro" id="IPR033247">
    <property type="entry name" value="Transketolase_fam"/>
</dbReference>
<dbReference type="InterPro" id="IPR005474">
    <property type="entry name" value="Transketolase_N"/>
</dbReference>
<dbReference type="NCBIfam" id="TIGR00232">
    <property type="entry name" value="tktlase_bact"/>
    <property type="match status" value="1"/>
</dbReference>
<dbReference type="PANTHER" id="PTHR43522">
    <property type="entry name" value="TRANSKETOLASE"/>
    <property type="match status" value="1"/>
</dbReference>
<dbReference type="PANTHER" id="PTHR43522:SF2">
    <property type="entry name" value="TRANSKETOLASE 1-RELATED"/>
    <property type="match status" value="1"/>
</dbReference>
<dbReference type="Pfam" id="PF02779">
    <property type="entry name" value="Transket_pyr"/>
    <property type="match status" value="1"/>
</dbReference>
<dbReference type="Pfam" id="PF22613">
    <property type="entry name" value="Transketolase_C_1"/>
    <property type="match status" value="1"/>
</dbReference>
<dbReference type="Pfam" id="PF00456">
    <property type="entry name" value="Transketolase_N"/>
    <property type="match status" value="1"/>
</dbReference>
<dbReference type="SMART" id="SM00861">
    <property type="entry name" value="Transket_pyr"/>
    <property type="match status" value="1"/>
</dbReference>
<dbReference type="SUPFAM" id="SSF52518">
    <property type="entry name" value="Thiamin diphosphate-binding fold (THDP-binding)"/>
    <property type="match status" value="2"/>
</dbReference>
<dbReference type="SUPFAM" id="SSF52922">
    <property type="entry name" value="TK C-terminal domain-like"/>
    <property type="match status" value="1"/>
</dbReference>
<dbReference type="PROSITE" id="PS00801">
    <property type="entry name" value="TRANSKETOLASE_1"/>
    <property type="match status" value="1"/>
</dbReference>
<dbReference type="PROSITE" id="PS00802">
    <property type="entry name" value="TRANSKETOLASE_2"/>
    <property type="match status" value="1"/>
</dbReference>
<comment type="function">
    <text evidence="2">Necessary for high-efficiency recombination chromosomal DNA during genetic transformation.</text>
</comment>
<comment type="function">
    <text evidence="1">Catalyzes the transfer of a two-carbon ketol group from a ketose donor to an aldose acceptor, via a covalent intermediate with the cofactor thiamine pyrophosphate.</text>
</comment>
<comment type="catalytic activity">
    <reaction>
        <text>D-sedoheptulose 7-phosphate + D-glyceraldehyde 3-phosphate = aldehydo-D-ribose 5-phosphate + D-xylulose 5-phosphate</text>
        <dbReference type="Rhea" id="RHEA:10508"/>
        <dbReference type="ChEBI" id="CHEBI:57483"/>
        <dbReference type="ChEBI" id="CHEBI:57737"/>
        <dbReference type="ChEBI" id="CHEBI:58273"/>
        <dbReference type="ChEBI" id="CHEBI:59776"/>
        <dbReference type="EC" id="2.2.1.1"/>
    </reaction>
</comment>
<comment type="cofactor">
    <cofactor evidence="1">
        <name>Mg(2+)</name>
        <dbReference type="ChEBI" id="CHEBI:18420"/>
    </cofactor>
    <cofactor evidence="1">
        <name>Ca(2+)</name>
        <dbReference type="ChEBI" id="CHEBI:29108"/>
    </cofactor>
    <cofactor evidence="1">
        <name>Mn(2+)</name>
        <dbReference type="ChEBI" id="CHEBI:29035"/>
    </cofactor>
    <cofactor evidence="1">
        <name>Co(2+)</name>
        <dbReference type="ChEBI" id="CHEBI:48828"/>
    </cofactor>
    <text evidence="1">Binds 1 Mg(2+) ion per subunit. Can also utilize other divalent metal cations, such as Ca(2+), Mn(2+) and Co(2+).</text>
</comment>
<comment type="cofactor">
    <cofactor evidence="1">
        <name>thiamine diphosphate</name>
        <dbReference type="ChEBI" id="CHEBI:58937"/>
    </cofactor>
    <text evidence="1">Binds 1 thiamine pyrophosphate per subunit.</text>
</comment>
<comment type="subunit">
    <text evidence="1">Homodimer.</text>
</comment>
<comment type="similarity">
    <text evidence="3">Belongs to the transketolase family.</text>
</comment>
<comment type="sequence caution" evidence="3">
    <conflict type="frameshift">
        <sequence resource="EMBL-CDS" id="AAA26967"/>
    </conflict>
</comment>
<sequence length="658" mass="71098">MSNLSVNAIRFLGIDAINKANSGHPGVVMGAAPMAYSLFTKQLHINPAQPNWINRDRFILSAGHGSMLLYALLHLSGFEDVSMDEIKSFRQWGSKTPGHPEFGHTAGIDATTGPLGQGISTATGFAQAERFLAAKYNREGYNIFDHYTYVICGDGDLMEGVSSEAASYAGLQKLDKLVVLYDSNDINLDGETKDSFTESVRDRYNAYGWHTALVENGTDLEAIHAAIETAKASGKPSLIEVKTVIGYGSPNKQGTNAVHGAPLGADETASTRQALGWDYEPFEIPEQVYADFKEHVADRGASAYQAWTKLVADYKEAHPELAAEVEAIIDGRDPVEVTPADFPALENGFSQATRNSSQDALNVVAAKLPTFLGGSADLAHSNMTYIKTDGLQDDANRLNRNIQFGVREFAMGTILNGMALHGGLRVYGGTFFVFSDYVKAAVRLSALQGLPVTYVFTHDSIAVGEDGPTHEPVEHLAGLRAMPNLNVFRPADARETQAAWYLAVTSEKTPTALVLTRQNLTVEDGTDFDKVAKGAYVVYENAADFDTILIATGSEVNLAVSAAKELASQGEKIRVVSMPSTDVFDKQDAAYKEEILPNAVRRRVAVEMGASQNWYKYVGLDGAVLGIDTFGASAPAPKVLAEYGFTVENLVKVVRNLK</sequence>
<gene>
    <name type="primary">tkt</name>
    <name type="synonym">recP</name>
    <name type="ordered locus">SP_2030</name>
</gene>
<feature type="chain" id="PRO_0000191878" description="Probable transketolase">
    <location>
        <begin position="1"/>
        <end position="658"/>
    </location>
</feature>
<feature type="active site" description="Proton donor" evidence="1">
    <location>
        <position position="408"/>
    </location>
</feature>
<feature type="binding site" evidence="1">
    <location>
        <position position="24"/>
    </location>
    <ligand>
        <name>substrate</name>
    </ligand>
</feature>
<feature type="binding site" evidence="1">
    <location>
        <position position="64"/>
    </location>
    <ligand>
        <name>thiamine diphosphate</name>
        <dbReference type="ChEBI" id="CHEBI:58937"/>
    </ligand>
</feature>
<feature type="binding site" evidence="1">
    <location>
        <begin position="113"/>
        <end position="115"/>
    </location>
    <ligand>
        <name>thiamine diphosphate</name>
        <dbReference type="ChEBI" id="CHEBI:58937"/>
    </ligand>
</feature>
<feature type="binding site" evidence="1">
    <location>
        <position position="154"/>
    </location>
    <ligand>
        <name>Mg(2+)</name>
        <dbReference type="ChEBI" id="CHEBI:18420"/>
    </ligand>
</feature>
<feature type="binding site" evidence="1">
    <location>
        <position position="155"/>
    </location>
    <ligand>
        <name>thiamine diphosphate</name>
        <dbReference type="ChEBI" id="CHEBI:58937"/>
    </ligand>
</feature>
<feature type="binding site" evidence="1">
    <location>
        <position position="184"/>
    </location>
    <ligand>
        <name>Mg(2+)</name>
        <dbReference type="ChEBI" id="CHEBI:18420"/>
    </ligand>
</feature>
<feature type="binding site" evidence="1">
    <location>
        <position position="184"/>
    </location>
    <ligand>
        <name>thiamine diphosphate</name>
        <dbReference type="ChEBI" id="CHEBI:58937"/>
    </ligand>
</feature>
<feature type="binding site" evidence="1">
    <location>
        <position position="186"/>
    </location>
    <ligand>
        <name>Mg(2+)</name>
        <dbReference type="ChEBI" id="CHEBI:18420"/>
    </ligand>
</feature>
<feature type="binding site" evidence="1">
    <location>
        <position position="259"/>
    </location>
    <ligand>
        <name>substrate</name>
    </ligand>
</feature>
<feature type="binding site" evidence="1">
    <location>
        <position position="259"/>
    </location>
    <ligand>
        <name>thiamine diphosphate</name>
        <dbReference type="ChEBI" id="CHEBI:58937"/>
    </ligand>
</feature>
<feature type="binding site" evidence="1">
    <location>
        <position position="354"/>
    </location>
    <ligand>
        <name>substrate</name>
    </ligand>
</feature>
<feature type="binding site" evidence="1">
    <location>
        <position position="381"/>
    </location>
    <ligand>
        <name>substrate</name>
    </ligand>
</feature>
<feature type="binding site" evidence="1">
    <location>
        <position position="434"/>
    </location>
    <ligand>
        <name>thiamine diphosphate</name>
        <dbReference type="ChEBI" id="CHEBI:58937"/>
    </ligand>
</feature>
<feature type="binding site" evidence="1">
    <location>
        <position position="458"/>
    </location>
    <ligand>
        <name>substrate</name>
    </ligand>
</feature>
<feature type="binding site" evidence="1">
    <location>
        <position position="466"/>
    </location>
    <ligand>
        <name>substrate</name>
    </ligand>
</feature>
<feature type="binding site" evidence="1">
    <location>
        <position position="517"/>
    </location>
    <ligand>
        <name>substrate</name>
    </ligand>
</feature>
<feature type="site" description="Important for catalytic activity" evidence="1">
    <location>
        <position position="24"/>
    </location>
</feature>
<feature type="site" description="Important for catalytic activity" evidence="1">
    <location>
        <position position="259"/>
    </location>
</feature>
<feature type="sequence conflict" description="In Ref. 1; AAA26967." evidence="3" ref="1">
    <original>ADARETQ</original>
    <variation>SRCAWNE</variation>
    <location>
        <begin position="491"/>
        <end position="497"/>
    </location>
</feature>
<feature type="sequence conflict" description="In Ref. 1; AAA26967." evidence="3" ref="1">
    <original>NAADFDTI</original>
    <variation>MQRPTLIPS</variation>
    <location>
        <begin position="541"/>
        <end position="548"/>
    </location>
</feature>
<feature type="sequence conflict" description="In Ref. 1; AAA26967." evidence="3" ref="1">
    <original>I</original>
    <variation>S</variation>
    <location>
        <position position="573"/>
    </location>
</feature>
<feature type="sequence conflict" description="In Ref. 1; AAA26967." evidence="3" ref="1">
    <original>V</original>
    <variation>I</variation>
    <location>
        <position position="653"/>
    </location>
</feature>
<feature type="helix" evidence="4">
    <location>
        <begin position="2"/>
        <end position="20"/>
    </location>
</feature>
<feature type="helix" evidence="4">
    <location>
        <begin position="25"/>
        <end position="41"/>
    </location>
</feature>
<feature type="strand" evidence="4">
    <location>
        <begin position="57"/>
        <end position="62"/>
    </location>
</feature>
<feature type="helix" evidence="4">
    <location>
        <begin position="63"/>
        <end position="65"/>
    </location>
</feature>
<feature type="helix" evidence="4">
    <location>
        <begin position="66"/>
        <end position="76"/>
    </location>
</feature>
<feature type="helix" evidence="4">
    <location>
        <begin position="83"/>
        <end position="86"/>
    </location>
</feature>
<feature type="turn" evidence="4">
    <location>
        <begin position="87"/>
        <end position="90"/>
    </location>
</feature>
<feature type="turn" evidence="4">
    <location>
        <begin position="102"/>
        <end position="104"/>
    </location>
</feature>
<feature type="helix" evidence="4">
    <location>
        <begin position="117"/>
        <end position="136"/>
    </location>
</feature>
<feature type="strand" evidence="4">
    <location>
        <begin position="148"/>
        <end position="152"/>
    </location>
</feature>
<feature type="helix" evidence="4">
    <location>
        <begin position="154"/>
        <end position="158"/>
    </location>
</feature>
<feature type="helix" evidence="4">
    <location>
        <begin position="160"/>
        <end position="172"/>
    </location>
</feature>
<feature type="strand" evidence="4">
    <location>
        <begin position="177"/>
        <end position="183"/>
    </location>
</feature>
<feature type="strand" evidence="4">
    <location>
        <begin position="185"/>
        <end position="187"/>
    </location>
</feature>
<feature type="helix" evidence="4">
    <location>
        <begin position="192"/>
        <end position="194"/>
    </location>
</feature>
<feature type="helix" evidence="4">
    <location>
        <begin position="200"/>
        <end position="206"/>
    </location>
</feature>
<feature type="strand" evidence="4">
    <location>
        <begin position="210"/>
        <end position="215"/>
    </location>
</feature>
<feature type="helix" evidence="4">
    <location>
        <begin position="220"/>
        <end position="231"/>
    </location>
</feature>
<feature type="strand" evidence="4">
    <location>
        <begin position="233"/>
        <end position="235"/>
    </location>
</feature>
<feature type="strand" evidence="4">
    <location>
        <begin position="237"/>
        <end position="242"/>
    </location>
</feature>
<feature type="turn" evidence="4">
    <location>
        <begin position="245"/>
        <end position="248"/>
    </location>
</feature>
<feature type="turn" evidence="4">
    <location>
        <begin position="250"/>
        <end position="254"/>
    </location>
</feature>
<feature type="helix" evidence="4">
    <location>
        <begin position="256"/>
        <end position="258"/>
    </location>
</feature>
<feature type="strand" evidence="4">
    <location>
        <begin position="259"/>
        <end position="261"/>
    </location>
</feature>
<feature type="helix" evidence="4">
    <location>
        <begin position="265"/>
        <end position="275"/>
    </location>
</feature>
<feature type="helix" evidence="4">
    <location>
        <begin position="286"/>
        <end position="295"/>
    </location>
</feature>
<feature type="helix" evidence="4">
    <location>
        <begin position="297"/>
        <end position="317"/>
    </location>
</feature>
<feature type="helix" evidence="4">
    <location>
        <begin position="319"/>
        <end position="330"/>
    </location>
</feature>
<feature type="helix" evidence="4">
    <location>
        <begin position="339"/>
        <end position="341"/>
    </location>
</feature>
<feature type="strand" evidence="4">
    <location>
        <begin position="350"/>
        <end position="352"/>
    </location>
</feature>
<feature type="helix" evidence="4">
    <location>
        <begin position="353"/>
        <end position="367"/>
    </location>
</feature>
<feature type="strand" evidence="4">
    <location>
        <begin position="371"/>
        <end position="377"/>
    </location>
</feature>
<feature type="helix" evidence="4">
    <location>
        <begin position="379"/>
        <end position="382"/>
    </location>
</feature>
<feature type="strand" evidence="4">
    <location>
        <begin position="401"/>
        <end position="403"/>
    </location>
</feature>
<feature type="helix" evidence="4">
    <location>
        <begin position="408"/>
        <end position="421"/>
    </location>
</feature>
<feature type="strand" evidence="4">
    <location>
        <begin position="425"/>
        <end position="431"/>
    </location>
</feature>
<feature type="helix" evidence="4">
    <location>
        <begin position="432"/>
        <end position="437"/>
    </location>
</feature>
<feature type="helix" evidence="4">
    <location>
        <begin position="439"/>
        <end position="448"/>
    </location>
</feature>
<feature type="strand" evidence="4">
    <location>
        <begin position="453"/>
        <end position="457"/>
    </location>
</feature>
<feature type="helix" evidence="4">
    <location>
        <begin position="461"/>
        <end position="463"/>
    </location>
</feature>
<feature type="helix" evidence="4">
    <location>
        <begin position="468"/>
        <end position="470"/>
    </location>
</feature>
<feature type="helix" evidence="4">
    <location>
        <begin position="475"/>
        <end position="480"/>
    </location>
</feature>
<feature type="strand" evidence="4">
    <location>
        <begin position="486"/>
        <end position="488"/>
    </location>
</feature>
<feature type="helix" evidence="4">
    <location>
        <begin position="493"/>
        <end position="505"/>
    </location>
</feature>
<feature type="strand" evidence="4">
    <location>
        <begin position="511"/>
        <end position="515"/>
    </location>
</feature>
<feature type="strand" evidence="4">
    <location>
        <begin position="517"/>
        <end position="521"/>
    </location>
</feature>
<feature type="helix" evidence="4">
    <location>
        <begin position="528"/>
        <end position="533"/>
    </location>
</feature>
<feature type="strand" evidence="4">
    <location>
        <begin position="536"/>
        <end position="541"/>
    </location>
</feature>
<feature type="strand" evidence="4">
    <location>
        <begin position="547"/>
        <end position="551"/>
    </location>
</feature>
<feature type="helix" evidence="4">
    <location>
        <begin position="555"/>
        <end position="568"/>
    </location>
</feature>
<feature type="strand" evidence="4">
    <location>
        <begin position="573"/>
        <end position="577"/>
    </location>
</feature>
<feature type="helix" evidence="4">
    <location>
        <begin position="581"/>
        <end position="584"/>
    </location>
</feature>
<feature type="helix" evidence="4">
    <location>
        <begin position="589"/>
        <end position="595"/>
    </location>
</feature>
<feature type="strand" evidence="4">
    <location>
        <begin position="603"/>
        <end position="606"/>
    </location>
</feature>
<feature type="helix" evidence="4">
    <location>
        <begin position="612"/>
        <end position="614"/>
    </location>
</feature>
<feature type="helix" evidence="4">
    <location>
        <begin position="615"/>
        <end position="618"/>
    </location>
</feature>
<feature type="strand" evidence="4">
    <location>
        <begin position="623"/>
        <end position="625"/>
    </location>
</feature>
<feature type="helix" evidence="4">
    <location>
        <begin position="636"/>
        <end position="643"/>
    </location>
</feature>
<feature type="helix" evidence="4">
    <location>
        <begin position="647"/>
        <end position="655"/>
    </location>
</feature>